<dbReference type="EC" id="3.1.26.5" evidence="1"/>
<dbReference type="EMBL" id="AP009493">
    <property type="protein sequence ID" value="BAG20527.1"/>
    <property type="molecule type" value="Genomic_DNA"/>
</dbReference>
<dbReference type="RefSeq" id="WP_003967883.1">
    <property type="nucleotide sequence ID" value="NC_010572.1"/>
</dbReference>
<dbReference type="SMR" id="B1VPE8"/>
<dbReference type="KEGG" id="sgr:SGR_3698"/>
<dbReference type="eggNOG" id="COG0594">
    <property type="taxonomic scope" value="Bacteria"/>
</dbReference>
<dbReference type="HOGENOM" id="CLU_117179_4_1_11"/>
<dbReference type="Proteomes" id="UP000001685">
    <property type="component" value="Chromosome"/>
</dbReference>
<dbReference type="GO" id="GO:0030677">
    <property type="term" value="C:ribonuclease P complex"/>
    <property type="evidence" value="ECO:0007669"/>
    <property type="project" value="TreeGrafter"/>
</dbReference>
<dbReference type="GO" id="GO:0042781">
    <property type="term" value="F:3'-tRNA processing endoribonuclease activity"/>
    <property type="evidence" value="ECO:0007669"/>
    <property type="project" value="TreeGrafter"/>
</dbReference>
<dbReference type="GO" id="GO:0004526">
    <property type="term" value="F:ribonuclease P activity"/>
    <property type="evidence" value="ECO:0007669"/>
    <property type="project" value="UniProtKB-UniRule"/>
</dbReference>
<dbReference type="GO" id="GO:0000049">
    <property type="term" value="F:tRNA binding"/>
    <property type="evidence" value="ECO:0007669"/>
    <property type="project" value="UniProtKB-UniRule"/>
</dbReference>
<dbReference type="GO" id="GO:0001682">
    <property type="term" value="P:tRNA 5'-leader removal"/>
    <property type="evidence" value="ECO:0007669"/>
    <property type="project" value="UniProtKB-UniRule"/>
</dbReference>
<dbReference type="Gene3D" id="3.30.230.10">
    <property type="match status" value="1"/>
</dbReference>
<dbReference type="HAMAP" id="MF_00227">
    <property type="entry name" value="RNase_P"/>
    <property type="match status" value="1"/>
</dbReference>
<dbReference type="InterPro" id="IPR020568">
    <property type="entry name" value="Ribosomal_Su5_D2-typ_SF"/>
</dbReference>
<dbReference type="InterPro" id="IPR014721">
    <property type="entry name" value="Ribsml_uS5_D2-typ_fold_subgr"/>
</dbReference>
<dbReference type="InterPro" id="IPR000100">
    <property type="entry name" value="RNase_P"/>
</dbReference>
<dbReference type="NCBIfam" id="TIGR00188">
    <property type="entry name" value="rnpA"/>
    <property type="match status" value="1"/>
</dbReference>
<dbReference type="PANTHER" id="PTHR33992">
    <property type="entry name" value="RIBONUCLEASE P PROTEIN COMPONENT"/>
    <property type="match status" value="1"/>
</dbReference>
<dbReference type="PANTHER" id="PTHR33992:SF1">
    <property type="entry name" value="RIBONUCLEASE P PROTEIN COMPONENT"/>
    <property type="match status" value="1"/>
</dbReference>
<dbReference type="Pfam" id="PF00825">
    <property type="entry name" value="Ribonuclease_P"/>
    <property type="match status" value="1"/>
</dbReference>
<dbReference type="SUPFAM" id="SSF54211">
    <property type="entry name" value="Ribosomal protein S5 domain 2-like"/>
    <property type="match status" value="1"/>
</dbReference>
<name>RNPA_STRGG</name>
<reference key="1">
    <citation type="journal article" date="2008" name="J. Bacteriol.">
        <title>Genome sequence of the streptomycin-producing microorganism Streptomyces griseus IFO 13350.</title>
        <authorList>
            <person name="Ohnishi Y."/>
            <person name="Ishikawa J."/>
            <person name="Hara H."/>
            <person name="Suzuki H."/>
            <person name="Ikenoya M."/>
            <person name="Ikeda H."/>
            <person name="Yamashita A."/>
            <person name="Hattori M."/>
            <person name="Horinouchi S."/>
        </authorList>
    </citation>
    <scope>NUCLEOTIDE SEQUENCE [LARGE SCALE GENOMIC DNA]</scope>
    <source>
        <strain>JCM 4626 / CBS 651.72 / NBRC 13350 / KCC S-0626 / ISP 5235</strain>
    </source>
</reference>
<evidence type="ECO:0000255" key="1">
    <source>
        <dbReference type="HAMAP-Rule" id="MF_00227"/>
    </source>
</evidence>
<keyword id="KW-0255">Endonuclease</keyword>
<keyword id="KW-0378">Hydrolase</keyword>
<keyword id="KW-0540">Nuclease</keyword>
<keyword id="KW-0694">RNA-binding</keyword>
<keyword id="KW-0819">tRNA processing</keyword>
<proteinExistence type="inferred from homology"/>
<organism>
    <name type="scientific">Streptomyces griseus subsp. griseus (strain JCM 4626 / CBS 651.72 / NBRC 13350 / KCC S-0626 / ISP 5235)</name>
    <dbReference type="NCBI Taxonomy" id="455632"/>
    <lineage>
        <taxon>Bacteria</taxon>
        <taxon>Bacillati</taxon>
        <taxon>Actinomycetota</taxon>
        <taxon>Actinomycetes</taxon>
        <taxon>Kitasatosporales</taxon>
        <taxon>Streptomycetaceae</taxon>
        <taxon>Streptomyces</taxon>
    </lineage>
</organism>
<comment type="function">
    <text evidence="1">RNaseP catalyzes the removal of the 5'-leader sequence from pre-tRNA to produce the mature 5'-terminus. It can also cleave other RNA substrates such as 4.5S RNA. The protein component plays an auxiliary but essential role in vivo by binding to the 5'-leader sequence and broadening the substrate specificity of the ribozyme.</text>
</comment>
<comment type="catalytic activity">
    <reaction evidence="1">
        <text>Endonucleolytic cleavage of RNA, removing 5'-extranucleotides from tRNA precursor.</text>
        <dbReference type="EC" id="3.1.26.5"/>
    </reaction>
</comment>
<comment type="subunit">
    <text evidence="1">Consists of a catalytic RNA component (M1 or rnpB) and a protein subunit.</text>
</comment>
<comment type="similarity">
    <text evidence="1">Belongs to the RnpA family.</text>
</comment>
<feature type="chain" id="PRO_1000100395" description="Ribonuclease P protein component">
    <location>
        <begin position="1"/>
        <end position="123"/>
    </location>
</feature>
<sequence>MLPTENRLRRREDFATAVRRGRRAGRPLLVVHLRSGDTDPHVTGETVPPPRAGFVVSKAVGGAVVRTAVKRRLRHLVRDRLAQLPPGSLVVVRALPGAGDADHAQLARDLDAALQRLLGGGAR</sequence>
<gene>
    <name evidence="1" type="primary">rnpA</name>
    <name type="ordered locus">SGR_3698</name>
</gene>
<accession>B1VPE8</accession>
<protein>
    <recommendedName>
        <fullName evidence="1">Ribonuclease P protein component</fullName>
        <shortName evidence="1">RNase P protein</shortName>
        <shortName evidence="1">RNaseP protein</shortName>
        <ecNumber evidence="1">3.1.26.5</ecNumber>
    </recommendedName>
    <alternativeName>
        <fullName evidence="1">Protein C5</fullName>
    </alternativeName>
</protein>